<reference key="1">
    <citation type="journal article" date="2006" name="Mol. Genet. Genomics">
        <title>Substrate specificity of N-methyltransferase involved in purine alkaloids synthesis is dependent upon one amino acid residue of the enzyme.</title>
        <authorList>
            <person name="Yoneyama N."/>
            <person name="Morimoto H."/>
            <person name="Ye C.-X."/>
            <person name="Ashihara H."/>
            <person name="Mizuno K."/>
            <person name="Kato M."/>
        </authorList>
    </citation>
    <scope>NUCLEOTIDE SEQUENCE [MRNA]</scope>
    <scope>FUNCTION</scope>
</reference>
<sequence>MKEVKEALFMNKGEGESSYAQNSSFTETVTSMTMPVLENAVETLFSKDFHLLQALNAVDLGCAAGPTTFTVISTIKKMMEKKCRELNCQTLELQVYLNDLPGNDFNTLFKGLSSKVVGNNCEEVSCYVVGVPGSFHGRLFPRNSLHLVHSCYSVHWLTQAPKGLTSKEGLALNKGKIYISKTSPPVVREAYLSQFHEDFTMFLNSRSQEVVPNGCMVLILRGRLSSDPSDMESCFTWELLAAAIAELVSQGLIDEDKLDTFNVPSYFPSLEEVKDIVERNGSFTIDHMEGFELDSPQMQENDKWVRGEKFATVARASTEPIISNQFGHEIMDKLYEKFTHIVISDLEAKIPKVTSIILVLSKIVG</sequence>
<gene>
    <name evidence="6" type="primary">PCS2</name>
</gene>
<name>PCS2_CAMPL</name>
<dbReference type="EC" id="2.1.1.159" evidence="2"/>
<dbReference type="EMBL" id="AB207818">
    <property type="protein sequence ID" value="BAE79733.1"/>
    <property type="molecule type" value="mRNA"/>
</dbReference>
<dbReference type="SMR" id="Q2HXI5"/>
<dbReference type="GO" id="GO:0046872">
    <property type="term" value="F:metal ion binding"/>
    <property type="evidence" value="ECO:0007669"/>
    <property type="project" value="UniProtKB-KW"/>
</dbReference>
<dbReference type="GO" id="GO:0008168">
    <property type="term" value="F:methyltransferase activity"/>
    <property type="evidence" value="ECO:0007669"/>
    <property type="project" value="UniProtKB-KW"/>
</dbReference>
<dbReference type="GO" id="GO:0032259">
    <property type="term" value="P:methylation"/>
    <property type="evidence" value="ECO:0007669"/>
    <property type="project" value="UniProtKB-KW"/>
</dbReference>
<dbReference type="Gene3D" id="1.10.1200.270">
    <property type="entry name" value="Methyltransferase, alpha-helical capping domain"/>
    <property type="match status" value="1"/>
</dbReference>
<dbReference type="Gene3D" id="3.40.50.150">
    <property type="entry name" value="Vaccinia Virus protein VP39"/>
    <property type="match status" value="1"/>
</dbReference>
<dbReference type="InterPro" id="IPR005299">
    <property type="entry name" value="MeTrfase_7"/>
</dbReference>
<dbReference type="InterPro" id="IPR042086">
    <property type="entry name" value="MeTrfase_capping"/>
</dbReference>
<dbReference type="InterPro" id="IPR029063">
    <property type="entry name" value="SAM-dependent_MTases_sf"/>
</dbReference>
<dbReference type="PANTHER" id="PTHR31009">
    <property type="entry name" value="S-ADENOSYL-L-METHIONINE:CARBOXYL METHYLTRANSFERASE FAMILY PROTEIN"/>
    <property type="match status" value="1"/>
</dbReference>
<dbReference type="Pfam" id="PF03492">
    <property type="entry name" value="Methyltransf_7"/>
    <property type="match status" value="1"/>
</dbReference>
<dbReference type="SUPFAM" id="SSF53335">
    <property type="entry name" value="S-adenosyl-L-methionine-dependent methyltransferases"/>
    <property type="match status" value="1"/>
</dbReference>
<comment type="function">
    <text evidence="5">No detectable N-methyltransferase activity.</text>
</comment>
<comment type="catalytic activity">
    <reaction evidence="2">
        <text>7-methylxanthine + S-adenosyl-L-methionine = theobromine + S-adenosyl-L-homocysteine + H(+)</text>
        <dbReference type="Rhea" id="RHEA:24604"/>
        <dbReference type="ChEBI" id="CHEBI:15378"/>
        <dbReference type="ChEBI" id="CHEBI:28946"/>
        <dbReference type="ChEBI" id="CHEBI:48991"/>
        <dbReference type="ChEBI" id="CHEBI:57856"/>
        <dbReference type="ChEBI" id="CHEBI:59789"/>
        <dbReference type="EC" id="2.1.1.159"/>
    </reaction>
    <physiologicalReaction direction="left-to-right" evidence="2">
        <dbReference type="Rhea" id="RHEA:24605"/>
    </physiologicalReaction>
</comment>
<comment type="cofactor">
    <cofactor evidence="3">
        <name>Mg(2+)</name>
        <dbReference type="ChEBI" id="CHEBI:18420"/>
    </cofactor>
    <text evidence="3">Binds 1 Mg(2+) ion per subunit.</text>
</comment>
<comment type="similarity">
    <text evidence="7">Belongs to the methyltransferase superfamily. Type-7 methyltransferase family.</text>
</comment>
<proteinExistence type="evidence at transcript level"/>
<protein>
    <recommendedName>
        <fullName evidence="6">Probable 7-methylxanthine methyltransferase PCS2</fullName>
        <ecNumber evidence="2">2.1.1.159</ecNumber>
    </recommendedName>
    <alternativeName>
        <fullName evidence="6">Theobromine synthase PCS2</fullName>
    </alternativeName>
</protein>
<organism>
    <name type="scientific">Camellia ptilophylla</name>
    <name type="common">Cocoa tea</name>
    <dbReference type="NCBI Taxonomy" id="319931"/>
    <lineage>
        <taxon>Eukaryota</taxon>
        <taxon>Viridiplantae</taxon>
        <taxon>Streptophyta</taxon>
        <taxon>Embryophyta</taxon>
        <taxon>Tracheophyta</taxon>
        <taxon>Spermatophyta</taxon>
        <taxon>Magnoliopsida</taxon>
        <taxon>eudicotyledons</taxon>
        <taxon>Gunneridae</taxon>
        <taxon>Pentapetalae</taxon>
        <taxon>asterids</taxon>
        <taxon>Ericales</taxon>
        <taxon>Theaceae</taxon>
        <taxon>Camellia</taxon>
    </lineage>
</organism>
<evidence type="ECO:0000250" key="1">
    <source>
        <dbReference type="UniProtKB" id="A0A6C0WW36"/>
    </source>
</evidence>
<evidence type="ECO:0000250" key="2">
    <source>
        <dbReference type="UniProtKB" id="Q2HXI6"/>
    </source>
</evidence>
<evidence type="ECO:0000250" key="3">
    <source>
        <dbReference type="UniProtKB" id="Q9FLN8"/>
    </source>
</evidence>
<evidence type="ECO:0000250" key="4">
    <source>
        <dbReference type="UniProtKB" id="Q9FZN8"/>
    </source>
</evidence>
<evidence type="ECO:0000269" key="5">
    <source>
    </source>
</evidence>
<evidence type="ECO:0000303" key="6">
    <source>
    </source>
</evidence>
<evidence type="ECO:0000305" key="7"/>
<feature type="chain" id="PRO_0000451791" description="Probable 7-methylxanthine methyltransferase PCS2">
    <location>
        <begin position="1"/>
        <end position="365"/>
    </location>
</feature>
<feature type="binding site" evidence="1">
    <location>
        <position position="19"/>
    </location>
    <ligand>
        <name>S-adenosyl-L-homocysteine</name>
        <dbReference type="ChEBI" id="CHEBI:57856"/>
    </ligand>
</feature>
<feature type="binding site" evidence="1">
    <location>
        <position position="26"/>
    </location>
    <ligand>
        <name>theobromine</name>
        <dbReference type="ChEBI" id="CHEBI:28946"/>
    </ligand>
</feature>
<feature type="binding site" evidence="1">
    <location>
        <position position="62"/>
    </location>
    <ligand>
        <name>S-adenosyl-L-homocysteine</name>
        <dbReference type="ChEBI" id="CHEBI:57856"/>
    </ligand>
</feature>
<feature type="binding site" evidence="1">
    <location>
        <position position="99"/>
    </location>
    <ligand>
        <name>S-adenosyl-L-homocysteine</name>
        <dbReference type="ChEBI" id="CHEBI:57856"/>
    </ligand>
</feature>
<feature type="binding site" evidence="1">
    <location>
        <position position="100"/>
    </location>
    <ligand>
        <name>S-adenosyl-L-homocysteine</name>
        <dbReference type="ChEBI" id="CHEBI:57856"/>
    </ligand>
</feature>
<feature type="binding site" evidence="1">
    <location>
        <position position="134"/>
    </location>
    <ligand>
        <name>S-adenosyl-L-homocysteine</name>
        <dbReference type="ChEBI" id="CHEBI:57856"/>
    </ligand>
</feature>
<feature type="binding site" evidence="1">
    <location>
        <position position="135"/>
    </location>
    <ligand>
        <name>S-adenosyl-L-homocysteine</name>
        <dbReference type="ChEBI" id="CHEBI:57856"/>
    </ligand>
</feature>
<feature type="binding site" evidence="1">
    <location>
        <position position="152"/>
    </location>
    <ligand>
        <name>theobromine</name>
        <dbReference type="ChEBI" id="CHEBI:28946"/>
    </ligand>
</feature>
<feature type="binding site" evidence="1">
    <location>
        <position position="155"/>
    </location>
    <ligand>
        <name>theobromine</name>
        <dbReference type="ChEBI" id="CHEBI:28946"/>
    </ligand>
</feature>
<feature type="binding site" evidence="1">
    <location>
        <position position="156"/>
    </location>
    <ligand>
        <name>theobromine</name>
        <dbReference type="ChEBI" id="CHEBI:28946"/>
    </ligand>
</feature>
<feature type="binding site" evidence="3">
    <location>
        <position position="173"/>
    </location>
    <ligand>
        <name>Mg(2+)</name>
        <dbReference type="ChEBI" id="CHEBI:18420"/>
    </ligand>
</feature>
<feature type="binding site" evidence="1">
    <location>
        <position position="221"/>
    </location>
    <ligand>
        <name>theobromine</name>
        <dbReference type="ChEBI" id="CHEBI:28946"/>
    </ligand>
</feature>
<feature type="binding site" evidence="3">
    <location>
        <position position="259"/>
    </location>
    <ligand>
        <name>Mg(2+)</name>
        <dbReference type="ChEBI" id="CHEBI:18420"/>
    </ligand>
</feature>
<feature type="binding site" evidence="3">
    <location>
        <position position="261"/>
    </location>
    <ligand>
        <name>Mg(2+)</name>
        <dbReference type="ChEBI" id="CHEBI:18420"/>
    </ligand>
</feature>
<feature type="binding site" evidence="3">
    <location>
        <position position="262"/>
    </location>
    <ligand>
        <name>Mg(2+)</name>
        <dbReference type="ChEBI" id="CHEBI:18420"/>
    </ligand>
</feature>
<feature type="site" description="Involved in substrate discrimination" evidence="4">
    <location>
        <position position="149"/>
    </location>
</feature>
<feature type="site" description="Involved in substrate discrimination" evidence="2">
    <location>
        <position position="221"/>
    </location>
</feature>
<feature type="site" description="Involved in substrate discrimination" evidence="4">
    <location>
        <position position="265"/>
    </location>
</feature>
<feature type="site" description="Involved in substrate discrimination" evidence="4">
    <location>
        <position position="313"/>
    </location>
</feature>
<feature type="site" description="Involved in substrate discrimination" evidence="4">
    <location>
        <position position="328"/>
    </location>
</feature>
<keyword id="KW-0460">Magnesium</keyword>
<keyword id="KW-0479">Metal-binding</keyword>
<keyword id="KW-0489">Methyltransferase</keyword>
<keyword id="KW-0808">Transferase</keyword>
<accession>Q2HXI5</accession>